<organism>
    <name type="scientific">Bos taurus</name>
    <name type="common">Bovine</name>
    <dbReference type="NCBI Taxonomy" id="9913"/>
    <lineage>
        <taxon>Eukaryota</taxon>
        <taxon>Metazoa</taxon>
        <taxon>Chordata</taxon>
        <taxon>Craniata</taxon>
        <taxon>Vertebrata</taxon>
        <taxon>Euteleostomi</taxon>
        <taxon>Mammalia</taxon>
        <taxon>Eutheria</taxon>
        <taxon>Laurasiatheria</taxon>
        <taxon>Artiodactyla</taxon>
        <taxon>Ruminantia</taxon>
        <taxon>Pecora</taxon>
        <taxon>Bovidae</taxon>
        <taxon>Bovinae</taxon>
        <taxon>Bos</taxon>
    </lineage>
</organism>
<comment type="function">
    <text evidence="1">Component of the PAF1 complex (PAF1C) which has multiple functions during transcription by RNA polymerase II and is implicated in regulation of development and maintenance of embryonic stem cell pluripotency. PAF1C associates with RNA polymerase II through interaction with POLR2A CTD non-phosphorylated and 'Ser-2'- and 'Ser-5'-phosphorylated forms and is involved in transcriptional elongation, acting both independently and synergistically with TCEA1 and in cooperation with the DSIF complex and HTATSF1. PAF1C is required for transcription of Hox and Wnt target genes. PAF1C is involved in hematopoiesis and stimulates transcriptional activity of KMT2A/MLL1. PAF1C is involved in histone modifications such as ubiquitination of histone H2B and methylation on histone H3 'Lys-4' (H3K4me3). PAF1C recruits the RNF20/40 E3 ubiquitin-protein ligase complex and the E2 enzyme UBE2A or UBE2B to chromatin which mediate monoubiquitination of 'Lys-120' of histone H2B (H2BK120ub1); UB2A/B-mediated H2B ubiquitination is proposed to be coupled to transcription. PAF1C is involved in mRNA 3' end formation probably through association with cleavage and poly(A) factors. Connects PAF1C with the RNF20/40 E3 ubiquitin-protein ligase complex. Involved in polyadenylation of mRNA precursors (By similarity).</text>
</comment>
<comment type="subunit">
    <text evidence="2 3">Component of the PAF1 complex, which consists of CDC73, PAF1, LEO1, CTR9, RTF1 and SKIC8 (By similarity). The PAF1 complex interacts with PHF5A (By similarity). Interacts with POLR2A, TCEA1, SKIC3, KMT2A/MLL1, SUPT5H, RNF20 and RNF40. Interacts with UBE2E1 (By similarity).</text>
</comment>
<comment type="subcellular location">
    <subcellularLocation>
        <location>Nucleus</location>
    </subcellularLocation>
    <text evidence="1">Punctuate distribution throughout the nucleus except in nucleoli and the perinuclear chromatin.</text>
</comment>
<comment type="similarity">
    <text evidence="6">Belongs to the PAF1 family.</text>
</comment>
<reference key="1">
    <citation type="submission" date="2005-09" db="EMBL/GenBank/DDBJ databases">
        <authorList>
            <consortium name="NIH - Mammalian Gene Collection (MGC) project"/>
        </authorList>
    </citation>
    <scope>NUCLEOTIDE SEQUENCE [LARGE SCALE MRNA]</scope>
    <source>
        <strain>Hereford</strain>
        <tissue>Ascending colon</tissue>
    </source>
</reference>
<evidence type="ECO:0000250" key="1"/>
<evidence type="ECO:0000250" key="2">
    <source>
        <dbReference type="UniProtKB" id="Q8K2T8"/>
    </source>
</evidence>
<evidence type="ECO:0000250" key="3">
    <source>
        <dbReference type="UniProtKB" id="Q8N7H5"/>
    </source>
</evidence>
<evidence type="ECO:0000255" key="4"/>
<evidence type="ECO:0000256" key="5">
    <source>
        <dbReference type="SAM" id="MobiDB-lite"/>
    </source>
</evidence>
<evidence type="ECO:0000305" key="6"/>
<name>PAF1_BOVIN</name>
<sequence length="532" mass="60280">MAPTIQTQAQREDGHRPNSHRTLPERSGVVCRVKYCNSLPDIPFDPKFITYPFDQNRFVQYKATSLEKQHKHDLLTEPDLGVTIDLINPDTYRIDPNVLLDPADEKLLEEEIQAPTSSKRSQQHAKVVPWMRKTEYISTEFNRYGISNEKPEVKIGVSVKQQFTEEEIYKDRDSQITAIEKTFEDAQKSISQHYSKPRVTPVEVMPVFPDFKMWINPCAQVIFDSDPAPKDTSGAAALEMMSQAMIRGMMDEEGNQFVAYFLPVEETLKKRKRDQEEEMDYAPDDVYDYKIAREYNWNVKNKASKGYEENYFFIFREGDGVYYNELETRVRLSKRRAKAGVQSGTNALLVVKHRDMNEKELEAQEARKAQLENHEPEEEEEEEMETEEKEAGASDEEREKGSSSEKEGSEDERSGSESEREEGDRDEASDKSGSGEDESSEDEARAARDKEEIFGSDADSEDDADSDDEDRGRARGSDNDSDSGSDGGGQRSRSHSRSRSASPFPSGSEHSAQEDGSEAAASDSSEADSDSD</sequence>
<proteinExistence type="evidence at transcript level"/>
<accession>Q2KJ14</accession>
<feature type="chain" id="PRO_0000326399" description="RNA polymerase II-associated factor 1 homolog">
    <location>
        <begin position="1"/>
        <end position="532"/>
    </location>
</feature>
<feature type="region of interest" description="Disordered" evidence="5">
    <location>
        <begin position="1"/>
        <end position="23"/>
    </location>
</feature>
<feature type="region of interest" description="Disordered" evidence="5">
    <location>
        <begin position="361"/>
        <end position="532"/>
    </location>
</feature>
<feature type="coiled-coil region" evidence="4">
    <location>
        <begin position="352"/>
        <end position="401"/>
    </location>
</feature>
<feature type="compositionally biased region" description="Basic and acidic residues" evidence="5">
    <location>
        <begin position="361"/>
        <end position="374"/>
    </location>
</feature>
<feature type="compositionally biased region" description="Acidic residues" evidence="5">
    <location>
        <begin position="375"/>
        <end position="388"/>
    </location>
</feature>
<feature type="compositionally biased region" description="Basic and acidic residues" evidence="5">
    <location>
        <begin position="389"/>
        <end position="434"/>
    </location>
</feature>
<feature type="compositionally biased region" description="Basic and acidic residues" evidence="5">
    <location>
        <begin position="442"/>
        <end position="453"/>
    </location>
</feature>
<feature type="compositionally biased region" description="Acidic residues" evidence="5">
    <location>
        <begin position="458"/>
        <end position="469"/>
    </location>
</feature>
<feature type="compositionally biased region" description="Low complexity" evidence="5">
    <location>
        <begin position="499"/>
        <end position="508"/>
    </location>
</feature>
<feature type="modified residue" description="Phosphoserine" evidence="3">
    <location>
        <position position="117"/>
    </location>
</feature>
<feature type="modified residue" description="Phosphoserine" evidence="2">
    <location>
        <position position="456"/>
    </location>
</feature>
<feature type="cross-link" description="Glycyl lysine isopeptide (Lys-Gly) (interchain with G-Cter in SUMO2)" evidence="3">
    <location>
        <position position="133"/>
    </location>
</feature>
<feature type="cross-link" description="Glycyl lysine isopeptide (Lys-Gly) (interchain with G-Cter in SUMO2)" evidence="3">
    <location>
        <position position="154"/>
    </location>
</feature>
<dbReference type="EMBL" id="BC105570">
    <property type="protein sequence ID" value="AAI05571.1"/>
    <property type="molecule type" value="mRNA"/>
</dbReference>
<dbReference type="RefSeq" id="NP_001039758.1">
    <property type="nucleotide sequence ID" value="NM_001046293.1"/>
</dbReference>
<dbReference type="SMR" id="Q2KJ14"/>
<dbReference type="FunCoup" id="Q2KJ14">
    <property type="interactions" value="5034"/>
</dbReference>
<dbReference type="STRING" id="9913.ENSBTAP00000027224"/>
<dbReference type="PaxDb" id="9913-ENSBTAP00000027224"/>
<dbReference type="Ensembl" id="ENSBTAT00000027224.7">
    <property type="protein sequence ID" value="ENSBTAP00000027224.6"/>
    <property type="gene ID" value="ENSBTAG00000020428.7"/>
</dbReference>
<dbReference type="GeneID" id="528744"/>
<dbReference type="KEGG" id="bta:528744"/>
<dbReference type="CTD" id="54623"/>
<dbReference type="VEuPathDB" id="HostDB:ENSBTAG00000020428"/>
<dbReference type="VGNC" id="VGNC:96701">
    <property type="gene designation" value="PAF1"/>
</dbReference>
<dbReference type="eggNOG" id="KOG2478">
    <property type="taxonomic scope" value="Eukaryota"/>
</dbReference>
<dbReference type="GeneTree" id="ENSGT00390000001474"/>
<dbReference type="HOGENOM" id="CLU_021991_0_0_1"/>
<dbReference type="InParanoid" id="Q2KJ14"/>
<dbReference type="OMA" id="LVCRIKY"/>
<dbReference type="OrthoDB" id="10260285at2759"/>
<dbReference type="Reactome" id="R-BTA-674695">
    <property type="pathway name" value="RNA Polymerase II Pre-transcription Events"/>
</dbReference>
<dbReference type="Reactome" id="R-BTA-75955">
    <property type="pathway name" value="RNA Polymerase II Transcription Elongation"/>
</dbReference>
<dbReference type="Reactome" id="R-BTA-8866654">
    <property type="pathway name" value="E3 ubiquitin ligases ubiquitinate target proteins"/>
</dbReference>
<dbReference type="Proteomes" id="UP000009136">
    <property type="component" value="Chromosome 18"/>
</dbReference>
<dbReference type="Bgee" id="ENSBTAG00000020428">
    <property type="expression patterns" value="Expressed in intramuscular adipose tissue and 102 other cell types or tissues"/>
</dbReference>
<dbReference type="GO" id="GO:0016593">
    <property type="term" value="C:Cdc73/Paf1 complex"/>
    <property type="evidence" value="ECO:0000250"/>
    <property type="project" value="UniProtKB"/>
</dbReference>
<dbReference type="GO" id="GO:0005737">
    <property type="term" value="C:cytoplasm"/>
    <property type="evidence" value="ECO:0007669"/>
    <property type="project" value="Ensembl"/>
</dbReference>
<dbReference type="GO" id="GO:0001650">
    <property type="term" value="C:fibrillar center"/>
    <property type="evidence" value="ECO:0007669"/>
    <property type="project" value="Ensembl"/>
</dbReference>
<dbReference type="GO" id="GO:0016020">
    <property type="term" value="C:membrane"/>
    <property type="evidence" value="ECO:0007669"/>
    <property type="project" value="Ensembl"/>
</dbReference>
<dbReference type="GO" id="GO:0003682">
    <property type="term" value="F:chromatin binding"/>
    <property type="evidence" value="ECO:0000318"/>
    <property type="project" value="GO_Central"/>
</dbReference>
<dbReference type="GO" id="GO:0000993">
    <property type="term" value="F:RNA polymerase II complex binding"/>
    <property type="evidence" value="ECO:0000250"/>
    <property type="project" value="UniProtKB"/>
</dbReference>
<dbReference type="GO" id="GO:0071222">
    <property type="term" value="P:cellular response to lipopolysaccharide"/>
    <property type="evidence" value="ECO:0000250"/>
    <property type="project" value="UniProtKB"/>
</dbReference>
<dbReference type="GO" id="GO:0001711">
    <property type="term" value="P:endodermal cell fate commitment"/>
    <property type="evidence" value="ECO:0000250"/>
    <property type="project" value="UniProtKB"/>
</dbReference>
<dbReference type="GO" id="GO:0031124">
    <property type="term" value="P:mRNA 3'-end processing"/>
    <property type="evidence" value="ECO:0000250"/>
    <property type="project" value="UniProtKB"/>
</dbReference>
<dbReference type="GO" id="GO:0045638">
    <property type="term" value="P:negative regulation of myeloid cell differentiation"/>
    <property type="evidence" value="ECO:0000250"/>
    <property type="project" value="UniProtKB"/>
</dbReference>
<dbReference type="GO" id="GO:0000122">
    <property type="term" value="P:negative regulation of transcription by RNA polymerase II"/>
    <property type="evidence" value="ECO:0000250"/>
    <property type="project" value="UniProtKB"/>
</dbReference>
<dbReference type="GO" id="GO:1902808">
    <property type="term" value="P:positive regulation of cell cycle G1/S phase transition"/>
    <property type="evidence" value="ECO:0000250"/>
    <property type="project" value="UniProtKB"/>
</dbReference>
<dbReference type="GO" id="GO:0045944">
    <property type="term" value="P:positive regulation of transcription by RNA polymerase II"/>
    <property type="evidence" value="ECO:0007669"/>
    <property type="project" value="Ensembl"/>
</dbReference>
<dbReference type="GO" id="GO:0034504">
    <property type="term" value="P:protein localization to nucleus"/>
    <property type="evidence" value="ECO:0007669"/>
    <property type="project" value="Ensembl"/>
</dbReference>
<dbReference type="GO" id="GO:0019827">
    <property type="term" value="P:stem cell population maintenance"/>
    <property type="evidence" value="ECO:0007669"/>
    <property type="project" value="Ensembl"/>
</dbReference>
<dbReference type="GO" id="GO:0006368">
    <property type="term" value="P:transcription elongation by RNA polymerase II"/>
    <property type="evidence" value="ECO:0000250"/>
    <property type="project" value="UniProtKB"/>
</dbReference>
<dbReference type="GO" id="GO:0016055">
    <property type="term" value="P:Wnt signaling pathway"/>
    <property type="evidence" value="ECO:0007669"/>
    <property type="project" value="UniProtKB-KW"/>
</dbReference>
<dbReference type="InterPro" id="IPR007133">
    <property type="entry name" value="RNA_pol_II-assoc_Paf1"/>
</dbReference>
<dbReference type="PANTHER" id="PTHR23188">
    <property type="entry name" value="RNA POLYMERASE II-ASSOCIATED FACTOR 1 HOMOLOG"/>
    <property type="match status" value="1"/>
</dbReference>
<dbReference type="PANTHER" id="PTHR23188:SF12">
    <property type="entry name" value="RNA POLYMERASE II-ASSOCIATED FACTOR 1 HOMOLOG"/>
    <property type="match status" value="1"/>
</dbReference>
<dbReference type="Pfam" id="PF03985">
    <property type="entry name" value="Paf1"/>
    <property type="match status" value="1"/>
</dbReference>
<protein>
    <recommendedName>
        <fullName>RNA polymerase II-associated factor 1 homolog</fullName>
    </recommendedName>
</protein>
<gene>
    <name type="primary">PAF1</name>
</gene>
<keyword id="KW-0175">Coiled coil</keyword>
<keyword id="KW-1017">Isopeptide bond</keyword>
<keyword id="KW-0539">Nucleus</keyword>
<keyword id="KW-0597">Phosphoprotein</keyword>
<keyword id="KW-1185">Reference proteome</keyword>
<keyword id="KW-0804">Transcription</keyword>
<keyword id="KW-0805">Transcription regulation</keyword>
<keyword id="KW-0832">Ubl conjugation</keyword>
<keyword id="KW-0879">Wnt signaling pathway</keyword>